<geneLocation type="plasmid">
    <name>pSymA</name>
    <name>megaplasmid 1</name>
</geneLocation>
<proteinExistence type="inferred from homology"/>
<accession>Q9Z3R1</accession>
<reference key="1">
    <citation type="journal article" date="2001" name="J. Bacteriol.">
        <title>Genetic organization of the region encoding regulation, biosynthesis, and transport of rhizobactin 1021, a siderophore produced by Sinorhizobium meliloti.</title>
        <authorList>
            <person name="Lynch D."/>
            <person name="O'Brien J."/>
            <person name="Welch T."/>
            <person name="Clarke P."/>
            <person name="Cuiv P.O."/>
            <person name="Crosa J.H."/>
            <person name="O'Connell M."/>
        </authorList>
    </citation>
    <scope>NUCLEOTIDE SEQUENCE [GENOMIC DNA]</scope>
    <source>
        <strain>RCR2011 / SU47</strain>
    </source>
</reference>
<reference key="2">
    <citation type="journal article" date="2001" name="Proc. Natl. Acad. Sci. U.S.A.">
        <title>Nucleotide sequence and predicted functions of the entire Sinorhizobium meliloti pSymA megaplasmid.</title>
        <authorList>
            <person name="Barnett M.J."/>
            <person name="Fisher R.F."/>
            <person name="Jones T."/>
            <person name="Komp C."/>
            <person name="Abola A.P."/>
            <person name="Barloy-Hubler F."/>
            <person name="Bowser L."/>
            <person name="Capela D."/>
            <person name="Galibert F."/>
            <person name="Gouzy J."/>
            <person name="Gurjal M."/>
            <person name="Hong A."/>
            <person name="Huizar L."/>
            <person name="Hyman R.W."/>
            <person name="Kahn D."/>
            <person name="Kahn M.L."/>
            <person name="Kalman S."/>
            <person name="Keating D.H."/>
            <person name="Palm C."/>
            <person name="Peck M.C."/>
            <person name="Surzycki R."/>
            <person name="Wells D.H."/>
            <person name="Yeh K.-C."/>
            <person name="Davis R.W."/>
            <person name="Federspiel N.A."/>
            <person name="Long S.R."/>
        </authorList>
    </citation>
    <scope>NUCLEOTIDE SEQUENCE [LARGE SCALE GENOMIC DNA]</scope>
    <source>
        <strain>1021</strain>
    </source>
</reference>
<reference key="3">
    <citation type="journal article" date="2001" name="Science">
        <title>The composite genome of the legume symbiont Sinorhizobium meliloti.</title>
        <authorList>
            <person name="Galibert F."/>
            <person name="Finan T.M."/>
            <person name="Long S.R."/>
            <person name="Puehler A."/>
            <person name="Abola P."/>
            <person name="Ampe F."/>
            <person name="Barloy-Hubler F."/>
            <person name="Barnett M.J."/>
            <person name="Becker A."/>
            <person name="Boistard P."/>
            <person name="Bothe G."/>
            <person name="Boutry M."/>
            <person name="Bowser L."/>
            <person name="Buhrmester J."/>
            <person name="Cadieu E."/>
            <person name="Capela D."/>
            <person name="Chain P."/>
            <person name="Cowie A."/>
            <person name="Davis R.W."/>
            <person name="Dreano S."/>
            <person name="Federspiel N.A."/>
            <person name="Fisher R.F."/>
            <person name="Gloux S."/>
            <person name="Godrie T."/>
            <person name="Goffeau A."/>
            <person name="Golding B."/>
            <person name="Gouzy J."/>
            <person name="Gurjal M."/>
            <person name="Hernandez-Lucas I."/>
            <person name="Hong A."/>
            <person name="Huizar L."/>
            <person name="Hyman R.W."/>
            <person name="Jones T."/>
            <person name="Kahn D."/>
            <person name="Kahn M.L."/>
            <person name="Kalman S."/>
            <person name="Keating D.H."/>
            <person name="Kiss E."/>
            <person name="Komp C."/>
            <person name="Lelaure V."/>
            <person name="Masuy D."/>
            <person name="Palm C."/>
            <person name="Peck M.C."/>
            <person name="Pohl T.M."/>
            <person name="Portetelle D."/>
            <person name="Purnelle B."/>
            <person name="Ramsperger U."/>
            <person name="Surzycki R."/>
            <person name="Thebault P."/>
            <person name="Vandenbol M."/>
            <person name="Vorhoelter F.J."/>
            <person name="Weidner S."/>
            <person name="Wells D.H."/>
            <person name="Wong K."/>
            <person name="Yeh K.-C."/>
            <person name="Batut J."/>
        </authorList>
    </citation>
    <scope>NUCLEOTIDE SEQUENCE [LARGE SCALE GENOMIC DNA]</scope>
    <source>
        <strain>1021</strain>
    </source>
</reference>
<organism>
    <name type="scientific">Rhizobium meliloti (strain 1021)</name>
    <name type="common">Ensifer meliloti</name>
    <name type="synonym">Sinorhizobium meliloti</name>
    <dbReference type="NCBI Taxonomy" id="266834"/>
    <lineage>
        <taxon>Bacteria</taxon>
        <taxon>Pseudomonadati</taxon>
        <taxon>Pseudomonadota</taxon>
        <taxon>Alphaproteobacteria</taxon>
        <taxon>Hyphomicrobiales</taxon>
        <taxon>Rhizobiaceae</taxon>
        <taxon>Sinorhizobium/Ensifer group</taxon>
        <taxon>Sinorhizobium</taxon>
    </lineage>
</organism>
<name>RHBB_RHIME</name>
<gene>
    <name type="primary">rhbB</name>
    <name type="synonym">rhsB</name>
    <name type="ordered locus">RA1259</name>
    <name type="ORF">SMa2402</name>
</gene>
<protein>
    <recommendedName>
        <fullName>L-2,4-diaminobutyrate decarboxylase</fullName>
        <shortName>DABA decarboxylase</shortName>
        <shortName>DABA-DC</shortName>
        <ecNumber>4.1.1.86</ecNumber>
    </recommendedName>
</protein>
<evidence type="ECO:0000250" key="1"/>
<evidence type="ECO:0000305" key="2"/>
<sequence length="495" mass="52464">MNINVAAFRTPPTKQTDHADQILGTDSESRRVFRNAMLQAIDMVVDQTAAASSLYSGTSFQGLRGLIDDLDPLPEVGTGIAAALAEIGRPALEHAMVVGHPAAMAHLHCPVAVPALAAEVLISATNQSLDSWDQSPFATLVEERVLACLTQLAELPASASGNFTSGGTQSNMTALYLAAVRCGPDARKAGVVLTSAHAHFSIRKSAAILGFAEDAVIAIAADADGRMSVPALKAELLRVAGEGRIPVAVVATAGTTDLGAIDPLVEIADLAAAQNVWMHVDAAYGGGLLFSRHRSRLEGLEHAHSITLDFHKMLFQPISCGVLLLRDRADFAPLASKADYLNPEDAVFADAPNLVERSMQTTRRADALKILMTMRAIGRDGLDALICQTLQNTHAAAEAVKTREYLSLAGPPSLSTVLFRYVSARGPKFADAITLKTRAALFNAGIAALATTVLDGRVHFKLTLLNPRSTPDVVHRILDAIGETARELETHHARP</sequence>
<feature type="chain" id="PRO_0000147005" description="L-2,4-diaminobutyrate decarboxylase">
    <location>
        <begin position="1"/>
        <end position="495"/>
    </location>
</feature>
<feature type="modified residue" description="N6-(pyridoxal phosphate)lysine" evidence="1">
    <location>
        <position position="312"/>
    </location>
</feature>
<dbReference type="EC" id="4.1.1.86"/>
<dbReference type="EMBL" id="AF110737">
    <property type="protein sequence ID" value="AAD09413.1"/>
    <property type="molecule type" value="Genomic_DNA"/>
</dbReference>
<dbReference type="EMBL" id="AE006469">
    <property type="protein sequence ID" value="AAK65917.1"/>
    <property type="molecule type" value="Genomic_DNA"/>
</dbReference>
<dbReference type="PIR" id="C95419">
    <property type="entry name" value="C95419"/>
</dbReference>
<dbReference type="PIR" id="T46815">
    <property type="entry name" value="T46815"/>
</dbReference>
<dbReference type="RefSeq" id="NP_436505.1">
    <property type="nucleotide sequence ID" value="NC_003037.1"/>
</dbReference>
<dbReference type="RefSeq" id="WP_010968202.1">
    <property type="nucleotide sequence ID" value="NC_003037.1"/>
</dbReference>
<dbReference type="SMR" id="Q9Z3R1"/>
<dbReference type="EnsemblBacteria" id="AAK65917">
    <property type="protein sequence ID" value="AAK65917"/>
    <property type="gene ID" value="SMa2402"/>
</dbReference>
<dbReference type="GeneID" id="89573404"/>
<dbReference type="KEGG" id="sme:SMa2402"/>
<dbReference type="PATRIC" id="fig|266834.11.peg.1312"/>
<dbReference type="HOGENOM" id="CLU_011856_0_4_5"/>
<dbReference type="OrthoDB" id="9803665at2"/>
<dbReference type="BioCyc" id="MetaCyc:MONOMER-15539"/>
<dbReference type="UniPathway" id="UPA00020"/>
<dbReference type="Proteomes" id="UP000001976">
    <property type="component" value="Plasmid pSymA"/>
</dbReference>
<dbReference type="GO" id="GO:0005737">
    <property type="term" value="C:cytoplasm"/>
    <property type="evidence" value="ECO:0007669"/>
    <property type="project" value="TreeGrafter"/>
</dbReference>
<dbReference type="GO" id="GO:0033983">
    <property type="term" value="F:diaminobutyrate decarboxylase activity"/>
    <property type="evidence" value="ECO:0007669"/>
    <property type="project" value="UniProtKB-EC"/>
</dbReference>
<dbReference type="GO" id="GO:0030170">
    <property type="term" value="F:pyridoxal phosphate binding"/>
    <property type="evidence" value="ECO:0007669"/>
    <property type="project" value="InterPro"/>
</dbReference>
<dbReference type="GO" id="GO:0019289">
    <property type="term" value="P:rhizobactin 1021 biosynthetic process"/>
    <property type="evidence" value="ECO:0007669"/>
    <property type="project" value="UniProtKB-UniPathway"/>
</dbReference>
<dbReference type="CDD" id="cd06450">
    <property type="entry name" value="DOPA_deC_like"/>
    <property type="match status" value="1"/>
</dbReference>
<dbReference type="Gene3D" id="3.90.1150.170">
    <property type="match status" value="1"/>
</dbReference>
<dbReference type="Gene3D" id="3.90.1150.10">
    <property type="entry name" value="Aspartate Aminotransferase, domain 1"/>
    <property type="match status" value="1"/>
</dbReference>
<dbReference type="Gene3D" id="3.40.640.10">
    <property type="entry name" value="Type I PLP-dependent aspartate aminotransferase-like (Major domain)"/>
    <property type="match status" value="1"/>
</dbReference>
<dbReference type="InterPro" id="IPR002129">
    <property type="entry name" value="PyrdxlP-dep_de-COase"/>
</dbReference>
<dbReference type="InterPro" id="IPR015424">
    <property type="entry name" value="PyrdxlP-dep_Trfase"/>
</dbReference>
<dbReference type="InterPro" id="IPR015421">
    <property type="entry name" value="PyrdxlP-dep_Trfase_major"/>
</dbReference>
<dbReference type="InterPro" id="IPR015422">
    <property type="entry name" value="PyrdxlP-dep_Trfase_small"/>
</dbReference>
<dbReference type="InterPro" id="IPR021115">
    <property type="entry name" value="Pyridoxal-P_BS"/>
</dbReference>
<dbReference type="PANTHER" id="PTHR45677:SF8">
    <property type="entry name" value="CYSTEINE SULFINIC ACID DECARBOXYLASE"/>
    <property type="match status" value="1"/>
</dbReference>
<dbReference type="PANTHER" id="PTHR45677">
    <property type="entry name" value="GLUTAMATE DECARBOXYLASE-RELATED"/>
    <property type="match status" value="1"/>
</dbReference>
<dbReference type="Pfam" id="PF00282">
    <property type="entry name" value="Pyridoxal_deC"/>
    <property type="match status" value="1"/>
</dbReference>
<dbReference type="SUPFAM" id="SSF53383">
    <property type="entry name" value="PLP-dependent transferases"/>
    <property type="match status" value="1"/>
</dbReference>
<dbReference type="PROSITE" id="PS00392">
    <property type="entry name" value="DDC_GAD_HDC_YDC"/>
    <property type="match status" value="1"/>
</dbReference>
<comment type="catalytic activity">
    <reaction>
        <text>L-2,4-diaminobutanoate + H(+) = propane-1,3-diamine + CO2</text>
        <dbReference type="Rhea" id="RHEA:15689"/>
        <dbReference type="ChEBI" id="CHEBI:15378"/>
        <dbReference type="ChEBI" id="CHEBI:16526"/>
        <dbReference type="ChEBI" id="CHEBI:57484"/>
        <dbReference type="ChEBI" id="CHEBI:58761"/>
        <dbReference type="EC" id="4.1.1.86"/>
    </reaction>
</comment>
<comment type="cofactor">
    <cofactor evidence="1">
        <name>pyridoxal 5'-phosphate</name>
        <dbReference type="ChEBI" id="CHEBI:597326"/>
    </cofactor>
</comment>
<comment type="pathway">
    <text>Siderophore biosynthesis; rhizobactin biosynthesis.</text>
</comment>
<comment type="similarity">
    <text evidence="2">Belongs to the group II decarboxylase family.</text>
</comment>
<keyword id="KW-0210">Decarboxylase</keyword>
<keyword id="KW-0456">Lyase</keyword>
<keyword id="KW-0614">Plasmid</keyword>
<keyword id="KW-0663">Pyridoxal phosphate</keyword>
<keyword id="KW-1185">Reference proteome</keyword>